<proteinExistence type="inferred from homology"/>
<reference key="1">
    <citation type="journal article" date="2009" name="J. Bacteriol.">
        <title>Complete genome sequence of Aggregatibacter (Haemophilus) aphrophilus NJ8700.</title>
        <authorList>
            <person name="Di Bonaventura M.P."/>
            <person name="DeSalle R."/>
            <person name="Pop M."/>
            <person name="Nagarajan N."/>
            <person name="Figurski D.H."/>
            <person name="Fine D.H."/>
            <person name="Kaplan J.B."/>
            <person name="Planet P.J."/>
        </authorList>
    </citation>
    <scope>NUCLEOTIDE SEQUENCE [LARGE SCALE GENOMIC DNA]</scope>
    <source>
        <strain>NJ8700</strain>
    </source>
</reference>
<organism>
    <name type="scientific">Aggregatibacter aphrophilus (strain NJ8700)</name>
    <name type="common">Haemophilus aphrophilus</name>
    <dbReference type="NCBI Taxonomy" id="634176"/>
    <lineage>
        <taxon>Bacteria</taxon>
        <taxon>Pseudomonadati</taxon>
        <taxon>Pseudomonadota</taxon>
        <taxon>Gammaproteobacteria</taxon>
        <taxon>Pasteurellales</taxon>
        <taxon>Pasteurellaceae</taxon>
        <taxon>Aggregatibacter</taxon>
    </lineage>
</organism>
<keyword id="KW-1003">Cell membrane</keyword>
<keyword id="KW-0472">Membrane</keyword>
<keyword id="KW-0812">Transmembrane</keyword>
<keyword id="KW-1133">Transmembrane helix</keyword>
<dbReference type="EMBL" id="CP001607">
    <property type="protein sequence ID" value="ACS96974.1"/>
    <property type="status" value="ALT_INIT"/>
    <property type="molecule type" value="Genomic_DNA"/>
</dbReference>
<dbReference type="RefSeq" id="WP_005700247.1">
    <property type="nucleotide sequence ID" value="NC_012913.1"/>
</dbReference>
<dbReference type="KEGG" id="aap:NT05HA_0561"/>
<dbReference type="PATRIC" id="fig|634176.19.peg.541"/>
<dbReference type="HOGENOM" id="CLU_125889_0_0_6"/>
<dbReference type="GO" id="GO:0005886">
    <property type="term" value="C:plasma membrane"/>
    <property type="evidence" value="ECO:0007669"/>
    <property type="project" value="UniProtKB-SubCell"/>
</dbReference>
<dbReference type="HAMAP" id="MF_01874">
    <property type="entry name" value="UPF0756"/>
    <property type="match status" value="1"/>
</dbReference>
<dbReference type="InterPro" id="IPR007382">
    <property type="entry name" value="UPF0756_TM"/>
</dbReference>
<dbReference type="PANTHER" id="PTHR38452">
    <property type="entry name" value="UPF0756 MEMBRANE PROTEIN YEAL"/>
    <property type="match status" value="1"/>
</dbReference>
<dbReference type="PANTHER" id="PTHR38452:SF1">
    <property type="entry name" value="UPF0756 MEMBRANE PROTEIN YEAL"/>
    <property type="match status" value="1"/>
</dbReference>
<dbReference type="Pfam" id="PF04284">
    <property type="entry name" value="DUF441"/>
    <property type="match status" value="1"/>
</dbReference>
<name>Y561_AGGAN</name>
<evidence type="ECO:0000255" key="1">
    <source>
        <dbReference type="HAMAP-Rule" id="MF_01874"/>
    </source>
</evidence>
<evidence type="ECO:0000305" key="2"/>
<comment type="subcellular location">
    <subcellularLocation>
        <location evidence="1">Cell membrane</location>
        <topology evidence="1">Multi-pass membrane protein</topology>
    </subcellularLocation>
</comment>
<comment type="similarity">
    <text evidence="1">Belongs to the UPF0756 family.</text>
</comment>
<comment type="sequence caution" evidence="2">
    <conflict type="erroneous initiation">
        <sequence resource="EMBL-CDS" id="ACS96974"/>
    </conflict>
</comment>
<accession>C6AMB3</accession>
<feature type="chain" id="PRO_0000388815" description="UPF0756 membrane protein NT05HA_0561">
    <location>
        <begin position="1"/>
        <end position="150"/>
    </location>
</feature>
<feature type="transmembrane region" description="Helical" evidence="1">
    <location>
        <begin position="1"/>
        <end position="21"/>
    </location>
</feature>
<feature type="transmembrane region" description="Helical" evidence="1">
    <location>
        <begin position="52"/>
        <end position="72"/>
    </location>
</feature>
<feature type="transmembrane region" description="Helical" evidence="1">
    <location>
        <begin position="81"/>
        <end position="101"/>
    </location>
</feature>
<feature type="transmembrane region" description="Helical" evidence="1">
    <location>
        <begin position="128"/>
        <end position="148"/>
    </location>
</feature>
<protein>
    <recommendedName>
        <fullName evidence="1">UPF0756 membrane protein NT05HA_0561</fullName>
    </recommendedName>
</protein>
<sequence length="150" mass="15626">MSLQFNMIALLLVILILLGIFSHNSSITISAAVLLIMQQTLLAKYIPYLEKYGLSIGIVILTIGVLSPLVSGKIQLPGLSAFVSWKMFVAIAVGVFVAWLAGKGVPLMGEQPVLVTGLVIGTIIGVSFLGGIPVGPLIAAGILAVLIGKF</sequence>
<gene>
    <name type="ordered locus">NT05HA_0561</name>
</gene>